<feature type="chain" id="PRO_0000323329" description="Small ribosomal subunit protein uS3c">
    <location>
        <begin position="1"/>
        <end position="239"/>
    </location>
</feature>
<feature type="domain" description="KH type-2">
    <location>
        <begin position="43"/>
        <end position="139"/>
    </location>
</feature>
<feature type="region of interest" description="Disordered" evidence="2">
    <location>
        <begin position="50"/>
        <end position="80"/>
    </location>
</feature>
<comment type="subunit">
    <text evidence="1">Part of the 30S ribosomal subunit.</text>
</comment>
<comment type="subcellular location">
    <subcellularLocation>
        <location>Plastid</location>
        <location>Chloroplast</location>
    </subcellularLocation>
</comment>
<comment type="similarity">
    <text evidence="3">Belongs to the universal ribosomal protein uS3 family.</text>
</comment>
<keyword id="KW-0150">Chloroplast</keyword>
<keyword id="KW-0934">Plastid</keyword>
<keyword id="KW-0687">Ribonucleoprotein</keyword>
<keyword id="KW-0689">Ribosomal protein</keyword>
<keyword id="KW-0694">RNA-binding</keyword>
<keyword id="KW-0699">rRNA-binding</keyword>
<proteinExistence type="inferred from homology"/>
<reference key="1">
    <citation type="journal article" date="2008" name="PLoS ONE">
        <title>An optimized chloroplast DNA extraction protocol for grasses (Poaceae) proves suitable for whole plastid genome sequencing and SNP detection.</title>
        <authorList>
            <person name="Diekmann K."/>
            <person name="Hodkinson T.R."/>
            <person name="Fricke E."/>
            <person name="Barth S."/>
        </authorList>
    </citation>
    <scope>NUCLEOTIDE SEQUENCE [LARGE SCALE GENOMIC DNA]</scope>
    <source>
        <strain>cv. Cashel</strain>
    </source>
</reference>
<protein>
    <recommendedName>
        <fullName evidence="3">Small ribosomal subunit protein uS3c</fullName>
    </recommendedName>
    <alternativeName>
        <fullName>30S ribosomal protein S3, chloroplastic</fullName>
    </alternativeName>
</protein>
<dbReference type="EMBL" id="AM777385">
    <property type="protein sequence ID" value="CAO86014.1"/>
    <property type="molecule type" value="Genomic_DNA"/>
</dbReference>
<dbReference type="RefSeq" id="YP_001531320.1">
    <property type="nucleotide sequence ID" value="NC_009950.1"/>
</dbReference>
<dbReference type="SMR" id="A8Y9C5"/>
<dbReference type="GeneID" id="5696574"/>
<dbReference type="KEGG" id="lper:5696574"/>
<dbReference type="GO" id="GO:0009507">
    <property type="term" value="C:chloroplast"/>
    <property type="evidence" value="ECO:0007669"/>
    <property type="project" value="UniProtKB-SubCell"/>
</dbReference>
<dbReference type="GO" id="GO:0022627">
    <property type="term" value="C:cytosolic small ribosomal subunit"/>
    <property type="evidence" value="ECO:0007669"/>
    <property type="project" value="TreeGrafter"/>
</dbReference>
<dbReference type="GO" id="GO:0019843">
    <property type="term" value="F:rRNA binding"/>
    <property type="evidence" value="ECO:0007669"/>
    <property type="project" value="UniProtKB-KW"/>
</dbReference>
<dbReference type="GO" id="GO:0003735">
    <property type="term" value="F:structural constituent of ribosome"/>
    <property type="evidence" value="ECO:0007669"/>
    <property type="project" value="InterPro"/>
</dbReference>
<dbReference type="GO" id="GO:0006412">
    <property type="term" value="P:translation"/>
    <property type="evidence" value="ECO:0007669"/>
    <property type="project" value="UniProtKB-UniRule"/>
</dbReference>
<dbReference type="CDD" id="cd02412">
    <property type="entry name" value="KH-II_30S_S3"/>
    <property type="match status" value="1"/>
</dbReference>
<dbReference type="FunFam" id="3.30.1140.32:FF:000003">
    <property type="entry name" value="30S ribosomal protein S3, chloroplastic"/>
    <property type="match status" value="1"/>
</dbReference>
<dbReference type="FunFam" id="3.30.300.20:FF:000008">
    <property type="entry name" value="30S ribosomal protein S3, chloroplastic"/>
    <property type="match status" value="1"/>
</dbReference>
<dbReference type="Gene3D" id="3.30.300.20">
    <property type="match status" value="1"/>
</dbReference>
<dbReference type="Gene3D" id="3.30.1140.32">
    <property type="entry name" value="Ribosomal protein S3, C-terminal domain"/>
    <property type="match status" value="1"/>
</dbReference>
<dbReference type="HAMAP" id="MF_01309_B">
    <property type="entry name" value="Ribosomal_uS3_B"/>
    <property type="match status" value="1"/>
</dbReference>
<dbReference type="InterPro" id="IPR015946">
    <property type="entry name" value="KH_dom-like_a/b"/>
</dbReference>
<dbReference type="InterPro" id="IPR009019">
    <property type="entry name" value="KH_sf_prok-type"/>
</dbReference>
<dbReference type="InterPro" id="IPR036419">
    <property type="entry name" value="Ribosomal_S3_C_sf"/>
</dbReference>
<dbReference type="InterPro" id="IPR005704">
    <property type="entry name" value="Ribosomal_uS3_bac-typ"/>
</dbReference>
<dbReference type="InterPro" id="IPR001351">
    <property type="entry name" value="Ribosomal_uS3_C"/>
</dbReference>
<dbReference type="InterPro" id="IPR018280">
    <property type="entry name" value="Ribosomal_uS3_CS"/>
</dbReference>
<dbReference type="NCBIfam" id="TIGR01009">
    <property type="entry name" value="rpsC_bact"/>
    <property type="match status" value="1"/>
</dbReference>
<dbReference type="PANTHER" id="PTHR11760">
    <property type="entry name" value="30S/40S RIBOSOMAL PROTEIN S3"/>
    <property type="match status" value="1"/>
</dbReference>
<dbReference type="PANTHER" id="PTHR11760:SF42">
    <property type="entry name" value="SMALL RIBOSOMAL SUBUNIT PROTEIN US3C"/>
    <property type="match status" value="1"/>
</dbReference>
<dbReference type="Pfam" id="PF00189">
    <property type="entry name" value="Ribosomal_S3_C"/>
    <property type="match status" value="1"/>
</dbReference>
<dbReference type="SUPFAM" id="SSF54814">
    <property type="entry name" value="Prokaryotic type KH domain (KH-domain type II)"/>
    <property type="match status" value="1"/>
</dbReference>
<dbReference type="SUPFAM" id="SSF54821">
    <property type="entry name" value="Ribosomal protein S3 C-terminal domain"/>
    <property type="match status" value="1"/>
</dbReference>
<dbReference type="PROSITE" id="PS00548">
    <property type="entry name" value="RIBOSOMAL_S3"/>
    <property type="match status" value="1"/>
</dbReference>
<gene>
    <name type="primary">rps3</name>
    <name type="ordered locus">LopeCp080</name>
</gene>
<geneLocation type="chloroplast"/>
<evidence type="ECO:0000250" key="1"/>
<evidence type="ECO:0000256" key="2">
    <source>
        <dbReference type="SAM" id="MobiDB-lite"/>
    </source>
</evidence>
<evidence type="ECO:0000305" key="3"/>
<organism>
    <name type="scientific">Lolium perenne</name>
    <name type="common">Perennial ryegrass</name>
    <dbReference type="NCBI Taxonomy" id="4522"/>
    <lineage>
        <taxon>Eukaryota</taxon>
        <taxon>Viridiplantae</taxon>
        <taxon>Streptophyta</taxon>
        <taxon>Embryophyta</taxon>
        <taxon>Tracheophyta</taxon>
        <taxon>Spermatophyta</taxon>
        <taxon>Magnoliopsida</taxon>
        <taxon>Liliopsida</taxon>
        <taxon>Poales</taxon>
        <taxon>Poaceae</taxon>
        <taxon>BOP clade</taxon>
        <taxon>Pooideae</taxon>
        <taxon>Poodae</taxon>
        <taxon>Poeae</taxon>
        <taxon>Poeae Chloroplast Group 2 (Poeae type)</taxon>
        <taxon>Loliodinae</taxon>
        <taxon>Loliinae</taxon>
        <taxon>Lolium</taxon>
    </lineage>
</organism>
<name>RR3_LOLPR</name>
<accession>A8Y9C5</accession>
<sequence length="239" mass="27591">MGQKINPLGFRLGTTQKHHSFWFAQPKNYSEGLQEDKKIRDCIKNYIQKNRKKSSNRKLESDSSSEVITHNRKNDSGSSSEVITRIEIQKEIDTIHVIIHIGFPNLLKKKGAIEELEKDLQKEIHSVNQRLNISIEKVKEPYREPNILAEYIAFQLKNRVSFRKAMKKAMELTKKADIKGVKVKIAGRLGGKEIARAECIKKGRLPLQTIRAKIDYCCYPIRTIYGVLGVKIWIFVDEE</sequence>